<keyword id="KW-1185">Reference proteome</keyword>
<keyword id="KW-0687">Ribonucleoprotein</keyword>
<keyword id="KW-0689">Ribosomal protein</keyword>
<keyword id="KW-0694">RNA-binding</keyword>
<keyword id="KW-0699">rRNA-binding</keyword>
<comment type="function">
    <text evidence="1">Protein S19 forms a complex with S13 that binds strongly to the 16S ribosomal RNA.</text>
</comment>
<comment type="similarity">
    <text evidence="1">Belongs to the universal ribosomal protein uS19 family.</text>
</comment>
<organism>
    <name type="scientific">Granulibacter bethesdensis (strain ATCC BAA-1260 / CGDNIH1)</name>
    <dbReference type="NCBI Taxonomy" id="391165"/>
    <lineage>
        <taxon>Bacteria</taxon>
        <taxon>Pseudomonadati</taxon>
        <taxon>Pseudomonadota</taxon>
        <taxon>Alphaproteobacteria</taxon>
        <taxon>Acetobacterales</taxon>
        <taxon>Acetobacteraceae</taxon>
        <taxon>Granulibacter</taxon>
    </lineage>
</organism>
<protein>
    <recommendedName>
        <fullName evidence="1">Small ribosomal subunit protein uS19</fullName>
    </recommendedName>
    <alternativeName>
        <fullName evidence="2">30S ribosomal protein S19</fullName>
    </alternativeName>
</protein>
<name>RS19_GRABC</name>
<accession>Q0BUP6</accession>
<gene>
    <name evidence="1" type="primary">rpsS</name>
    <name type="ordered locus">GbCGDNIH1_0558</name>
</gene>
<reference key="1">
    <citation type="journal article" date="2007" name="J. Bacteriol.">
        <title>Genome sequence analysis of the emerging human pathogenic acetic acid bacterium Granulibacter bethesdensis.</title>
        <authorList>
            <person name="Greenberg D.E."/>
            <person name="Porcella S.F."/>
            <person name="Zelazny A.M."/>
            <person name="Virtaneva K."/>
            <person name="Sturdevant D.E."/>
            <person name="Kupko J.J. III"/>
            <person name="Barbian K.D."/>
            <person name="Babar A."/>
            <person name="Dorward D.W."/>
            <person name="Holland S.M."/>
        </authorList>
    </citation>
    <scope>NUCLEOTIDE SEQUENCE [LARGE SCALE GENOMIC DNA]</scope>
    <source>
        <strain>ATCC BAA-1260 / CGDNIH1</strain>
    </source>
</reference>
<feature type="chain" id="PRO_0000265367" description="Small ribosomal subunit protein uS19">
    <location>
        <begin position="1"/>
        <end position="92"/>
    </location>
</feature>
<dbReference type="EMBL" id="CP000394">
    <property type="protein sequence ID" value="ABI61456.1"/>
    <property type="molecule type" value="Genomic_DNA"/>
</dbReference>
<dbReference type="RefSeq" id="WP_011631265.1">
    <property type="nucleotide sequence ID" value="NC_008343.2"/>
</dbReference>
<dbReference type="SMR" id="Q0BUP6"/>
<dbReference type="STRING" id="391165.GbCGDNIH1_0558"/>
<dbReference type="GeneID" id="69744811"/>
<dbReference type="KEGG" id="gbe:GbCGDNIH1_0558"/>
<dbReference type="eggNOG" id="COG0185">
    <property type="taxonomic scope" value="Bacteria"/>
</dbReference>
<dbReference type="HOGENOM" id="CLU_144911_0_1_5"/>
<dbReference type="OrthoDB" id="9797833at2"/>
<dbReference type="Proteomes" id="UP000001963">
    <property type="component" value="Chromosome"/>
</dbReference>
<dbReference type="GO" id="GO:0005737">
    <property type="term" value="C:cytoplasm"/>
    <property type="evidence" value="ECO:0007669"/>
    <property type="project" value="UniProtKB-ARBA"/>
</dbReference>
<dbReference type="GO" id="GO:0015935">
    <property type="term" value="C:small ribosomal subunit"/>
    <property type="evidence" value="ECO:0007669"/>
    <property type="project" value="InterPro"/>
</dbReference>
<dbReference type="GO" id="GO:0019843">
    <property type="term" value="F:rRNA binding"/>
    <property type="evidence" value="ECO:0007669"/>
    <property type="project" value="UniProtKB-UniRule"/>
</dbReference>
<dbReference type="GO" id="GO:0003735">
    <property type="term" value="F:structural constituent of ribosome"/>
    <property type="evidence" value="ECO:0007669"/>
    <property type="project" value="InterPro"/>
</dbReference>
<dbReference type="GO" id="GO:0000028">
    <property type="term" value="P:ribosomal small subunit assembly"/>
    <property type="evidence" value="ECO:0007669"/>
    <property type="project" value="TreeGrafter"/>
</dbReference>
<dbReference type="GO" id="GO:0006412">
    <property type="term" value="P:translation"/>
    <property type="evidence" value="ECO:0007669"/>
    <property type="project" value="UniProtKB-UniRule"/>
</dbReference>
<dbReference type="FunFam" id="3.30.860.10:FF:000001">
    <property type="entry name" value="30S ribosomal protein S19"/>
    <property type="match status" value="1"/>
</dbReference>
<dbReference type="Gene3D" id="3.30.860.10">
    <property type="entry name" value="30s Ribosomal Protein S19, Chain A"/>
    <property type="match status" value="1"/>
</dbReference>
<dbReference type="HAMAP" id="MF_00531">
    <property type="entry name" value="Ribosomal_uS19"/>
    <property type="match status" value="1"/>
</dbReference>
<dbReference type="InterPro" id="IPR002222">
    <property type="entry name" value="Ribosomal_uS19"/>
</dbReference>
<dbReference type="InterPro" id="IPR005732">
    <property type="entry name" value="Ribosomal_uS19_bac-type"/>
</dbReference>
<dbReference type="InterPro" id="IPR020934">
    <property type="entry name" value="Ribosomal_uS19_CS"/>
</dbReference>
<dbReference type="InterPro" id="IPR023575">
    <property type="entry name" value="Ribosomal_uS19_SF"/>
</dbReference>
<dbReference type="NCBIfam" id="TIGR01050">
    <property type="entry name" value="rpsS_bact"/>
    <property type="match status" value="1"/>
</dbReference>
<dbReference type="PANTHER" id="PTHR11880">
    <property type="entry name" value="RIBOSOMAL PROTEIN S19P FAMILY MEMBER"/>
    <property type="match status" value="1"/>
</dbReference>
<dbReference type="PANTHER" id="PTHR11880:SF8">
    <property type="entry name" value="SMALL RIBOSOMAL SUBUNIT PROTEIN US19M"/>
    <property type="match status" value="1"/>
</dbReference>
<dbReference type="Pfam" id="PF00203">
    <property type="entry name" value="Ribosomal_S19"/>
    <property type="match status" value="1"/>
</dbReference>
<dbReference type="PIRSF" id="PIRSF002144">
    <property type="entry name" value="Ribosomal_S19"/>
    <property type="match status" value="1"/>
</dbReference>
<dbReference type="PRINTS" id="PR00975">
    <property type="entry name" value="RIBOSOMALS19"/>
</dbReference>
<dbReference type="SUPFAM" id="SSF54570">
    <property type="entry name" value="Ribosomal protein S19"/>
    <property type="match status" value="1"/>
</dbReference>
<dbReference type="PROSITE" id="PS00323">
    <property type="entry name" value="RIBOSOMAL_S19"/>
    <property type="match status" value="1"/>
</dbReference>
<proteinExistence type="inferred from homology"/>
<sequence length="92" mass="10263">MARSVWKGPFVDGYLLNKADAARASGRNEIIKIWSRRSTILPQFVGLTFGVYNGHKFLPVQVTENMVGHKFGEFSPTRTFPGHAADKKAKRG</sequence>
<evidence type="ECO:0000255" key="1">
    <source>
        <dbReference type="HAMAP-Rule" id="MF_00531"/>
    </source>
</evidence>
<evidence type="ECO:0000305" key="2"/>